<feature type="chain" id="PRO_0000295201" description="Nucleoprotein">
    <location>
        <begin position="1"/>
        <end position="450"/>
    </location>
</feature>
<feature type="modified residue" description="Phosphoserine; by host CK2" evidence="1">
    <location>
        <position position="389"/>
    </location>
</feature>
<gene>
    <name type="primary">N</name>
</gene>
<accession>Q8JTH3</accession>
<organism>
    <name type="scientific">Australian bat lyssavirus (isolate Human/AUS/1998)</name>
    <name type="common">ABLV</name>
    <dbReference type="NCBI Taxonomy" id="446562"/>
    <lineage>
        <taxon>Viruses</taxon>
        <taxon>Riboviria</taxon>
        <taxon>Orthornavirae</taxon>
        <taxon>Negarnaviricota</taxon>
        <taxon>Haploviricotina</taxon>
        <taxon>Monjiviricetes</taxon>
        <taxon>Mononegavirales</taxon>
        <taxon>Rhabdoviridae</taxon>
        <taxon>Alpharhabdovirinae</taxon>
        <taxon>Lyssavirus</taxon>
        <taxon>Lyssavirus australis</taxon>
    </lineage>
</organism>
<proteinExistence type="inferred from homology"/>
<evidence type="ECO:0000250" key="1"/>
<evidence type="ECO:0000305" key="2"/>
<comment type="function">
    <text evidence="1">Encapsidates the genome in a ratio of one protein N per nine ribonucleotides, protecting it from nucleases. If expressed without protein P it binds non-specifically RNA and therefore can bind it's own mRNA. Interaction with protein P abolishes any non-specific RNA binding, and prevents phosphorylation. The soluble N-P complex encapsidates specifically the genomic RNA, with protein N protecting the genome like a pearl necklace. The encapsidated genomic RNA is termed the nucleocapsid (NC) and serves as template for viral transcription and replication. Protein N binds protein P in the NC through a different interaction, and can be phosphorylated. Subsequent viral replication is dependent on intracellular concentration of newly synthesized protein N. During replication, encapsidation by protein N is coupled to RNA synthesis and all replicative products are resistant to nucleases (By similarity).</text>
</comment>
<comment type="subunit">
    <text evidence="1">Homomultimerizes to form the nucleocapsid. Binds to viral genomic RNA. In nucleocapsid, binds protein P and thereby positions the polymerase on the template. Protein P acts as a chaperone on free protein N to prevent it from aggregation before encapsidating genomic RNA (By similarity).</text>
</comment>
<comment type="subcellular location">
    <subcellularLocation>
        <location>Virion</location>
    </subcellularLocation>
    <subcellularLocation>
        <location evidence="1">Host cytoplasm</location>
    </subcellularLocation>
</comment>
<comment type="PTM">
    <text evidence="1">Phosphorylated by host CK2. Unphosphorylated protein N seems to have a better affinity for leader viral promoter encapsidation. Phosphorylation of protein N in ribonucleocapsid may stabilize the interaction with protein P, thereby playing an important role in viral transcription/replication (By similarity).</text>
</comment>
<comment type="miscellaneous">
    <text evidence="1">Displays a superantigen activity in human and mouse, activating mostly V-beta-8 subtypes of T-cell receptor.</text>
</comment>
<comment type="similarity">
    <text evidence="2">Belongs to the lyssavirus nucleocapsid protein family.</text>
</comment>
<keyword id="KW-0167">Capsid protein</keyword>
<keyword id="KW-1139">Helical capsid protein</keyword>
<keyword id="KW-1035">Host cytoplasm</keyword>
<keyword id="KW-0597">Phosphoprotein</keyword>
<keyword id="KW-0687">Ribonucleoprotein</keyword>
<keyword id="KW-0694">RNA-binding</keyword>
<keyword id="KW-0766">Superantigen</keyword>
<keyword id="KW-0543">Viral nucleoprotein</keyword>
<keyword id="KW-0946">Virion</keyword>
<protein>
    <recommendedName>
        <fullName>Nucleoprotein</fullName>
        <shortName>NP</shortName>
    </recommendedName>
    <alternativeName>
        <fullName>Nucleocapsid protein</fullName>
        <shortName>Protein N</shortName>
    </alternativeName>
</protein>
<reference key="1">
    <citation type="journal article" date="2002" name="Virology">
        <title>Sequence analysis of an isolate from a fatal human infection of Australian bat lyssavirus.</title>
        <authorList>
            <person name="Warrilow D."/>
            <person name="Smith I.L."/>
            <person name="Harrower B."/>
            <person name="Smith G.A."/>
        </authorList>
    </citation>
    <scope>NUCLEOTIDE SEQUENCE [GENOMIC RNA]</scope>
</reference>
<organismHost>
    <name type="scientific">Homo sapiens</name>
    <name type="common">Human</name>
    <dbReference type="NCBI Taxonomy" id="9606"/>
</organismHost>
<organismHost>
    <name type="scientific">Pteropus alecto</name>
    <name type="common">Black flying fox</name>
    <dbReference type="NCBI Taxonomy" id="9402"/>
</organismHost>
<organismHost>
    <name type="scientific">Pteropus conspicillatus</name>
    <name type="common">Spectacled flying fox</name>
    <dbReference type="NCBI Taxonomy" id="328804"/>
</organismHost>
<organismHost>
    <name type="scientific">Pteropus poliocephalus</name>
    <name type="common">Grey-headed flying fox</name>
    <dbReference type="NCBI Taxonomy" id="9403"/>
</organismHost>
<organismHost>
    <name type="scientific">Pteropus scapulatus</name>
    <name type="common">Little red flying fox</name>
    <dbReference type="NCBI Taxonomy" id="94117"/>
</organismHost>
<organismHost>
    <name type="scientific">Saccolaimus</name>
    <dbReference type="NCBI Taxonomy" id="446909"/>
</organismHost>
<dbReference type="EMBL" id="AF418014">
    <property type="protein sequence ID" value="AAN05306.1"/>
    <property type="molecule type" value="Genomic_RNA"/>
</dbReference>
<dbReference type="SMR" id="Q8JTH3"/>
<dbReference type="Proteomes" id="UP000006884">
    <property type="component" value="Genome"/>
</dbReference>
<dbReference type="GO" id="GO:0019029">
    <property type="term" value="C:helical viral capsid"/>
    <property type="evidence" value="ECO:0007669"/>
    <property type="project" value="UniProtKB-KW"/>
</dbReference>
<dbReference type="GO" id="GO:0030430">
    <property type="term" value="C:host cell cytoplasm"/>
    <property type="evidence" value="ECO:0007669"/>
    <property type="project" value="UniProtKB-SubCell"/>
</dbReference>
<dbReference type="GO" id="GO:1990904">
    <property type="term" value="C:ribonucleoprotein complex"/>
    <property type="evidence" value="ECO:0007669"/>
    <property type="project" value="UniProtKB-KW"/>
</dbReference>
<dbReference type="GO" id="GO:0019013">
    <property type="term" value="C:viral nucleocapsid"/>
    <property type="evidence" value="ECO:0007669"/>
    <property type="project" value="UniProtKB-KW"/>
</dbReference>
<dbReference type="GO" id="GO:0003723">
    <property type="term" value="F:RNA binding"/>
    <property type="evidence" value="ECO:0007669"/>
    <property type="project" value="UniProtKB-KW"/>
</dbReference>
<dbReference type="Gene3D" id="1.10.3610.10">
    <property type="entry name" value="Nucleoprotein"/>
    <property type="match status" value="1"/>
</dbReference>
<dbReference type="Gene3D" id="1.10.3570.10">
    <property type="entry name" value="Rhabdovirus nucleocapsid protein like domain"/>
    <property type="match status" value="1"/>
</dbReference>
<dbReference type="InterPro" id="IPR000448">
    <property type="entry name" value="Rhabdo_ncapsid"/>
</dbReference>
<dbReference type="InterPro" id="IPR023331">
    <property type="entry name" value="Rhabdovirus_ncapsid_C"/>
</dbReference>
<dbReference type="InterPro" id="IPR023330">
    <property type="entry name" value="Rhabdovirus_ncapsid_N"/>
</dbReference>
<dbReference type="InterPro" id="IPR035961">
    <property type="entry name" value="Rhabdovirus_nucleoprotein-like"/>
</dbReference>
<dbReference type="Pfam" id="PF00945">
    <property type="entry name" value="Rhabdo_ncap"/>
    <property type="match status" value="1"/>
</dbReference>
<dbReference type="SUPFAM" id="SSF140809">
    <property type="entry name" value="Rhabdovirus nucleoprotein-like"/>
    <property type="match status" value="1"/>
</dbReference>
<sequence>MDSDKIVFKVNNQLVSVKPEVIVDQYEYKYPAIKDQKKPSITLGKAPDLNKAYKSILSGMNAAKLDPDDVCSYLAAAMELFEGVCPEDWTSYGILIARKGDKITPATLVDIKRTDIEGNWALTGGQDLTRDPTVAEHASLVGLLLSLYRLSKISGQNTGNYKTNIADRIEQIFETAPFAKIVEHHTLMTTHKMCANWSTIPNFRFLAGTYDMFFSRVEHLYSAIRVGTVVTAYEDCSGLVSFTGFIKQINLTAREAILYFFHKNFEEEIRRMFEPGQETAVPHSYFIHFRSLGLSGKSPYSSNAVGHVFNLIHFVGCYMGQIRSLNATVISTCAPHEMSVLGGYLGEEFFGKGTFERRFFRNEKELQDYEAAESMKTDIALADDATVNSDDEDYFSGETRGPEAVYTRIMMNGGRLKRSHIRRYISVSSNHQSRPNSFAEFLNKTYSSDS</sequence>
<name>NCAP_ABLVH</name>